<comment type="function">
    <text evidence="2">Component of the ubiquinol-cytochrome c reductase complex (complex III or cytochrome b-c1 complex) that is part of the mitochondrial respiratory chain. The b-c1 complex mediates electron transfer from ubiquinol to cytochrome c. Contributes to the generation of a proton gradient across the mitochondrial membrane that is then used for ATP synthesis.</text>
</comment>
<comment type="cofactor">
    <cofactor evidence="2">
        <name>heme b</name>
        <dbReference type="ChEBI" id="CHEBI:60344"/>
    </cofactor>
    <text evidence="2">Binds 2 heme b groups non-covalently.</text>
</comment>
<comment type="subunit">
    <text evidence="2">The cytochrome bc1 complex contains 11 subunits: 3 respiratory subunits (MT-CYB, CYC1 and UQCRFS1), 2 core proteins (UQCRC1 and UQCRC2) and 6 low-molecular weight proteins (UQCRH/QCR6, UQCRB/QCR7, UQCRQ/QCR8, UQCR10/QCR9, UQCR11/QCR10 and a cleavage product of UQCRFS1). This cytochrome bc1 complex then forms a dimer.</text>
</comment>
<comment type="subcellular location">
    <subcellularLocation>
        <location evidence="2">Mitochondrion inner membrane</location>
        <topology evidence="2">Multi-pass membrane protein</topology>
    </subcellularLocation>
</comment>
<comment type="miscellaneous">
    <text evidence="1">Heme 1 (or BL or b562) is low-potential and absorbs at about 562 nm, and heme 2 (or BH or b566) is high-potential and absorbs at about 566 nm.</text>
</comment>
<comment type="similarity">
    <text evidence="3 4">Belongs to the cytochrome b family.</text>
</comment>
<comment type="caution">
    <text evidence="2">The full-length protein contains only eight transmembrane helices, not nine as predicted by bioinformatics tools.</text>
</comment>
<proteinExistence type="inferred from homology"/>
<reference key="1">
    <citation type="submission" date="2003-12" db="EMBL/GenBank/DDBJ databases">
        <title>Molecular phylogenetics and diversification of South American grass mice, genus Akodon.</title>
        <authorList>
            <person name="Smith M.F."/>
            <person name="Patton J.L."/>
        </authorList>
    </citation>
    <scope>NUCLEOTIDE SEQUENCE [GENOMIC DNA]</scope>
    <source>
        <strain>Isolate MVZ 173057</strain>
        <tissue>Liver</tissue>
    </source>
</reference>
<reference key="2">
    <citation type="journal article" date="1993" name="Biol. J. Linn. Soc. Lond.">
        <title>The diversification of South American murid rodents: evidence from mitochondrial DNA sequence data for the akodontine tribe.</title>
        <authorList>
            <person name="Smith M.F."/>
            <person name="Patton J.L."/>
        </authorList>
    </citation>
    <scope>NUCLEOTIDE SEQUENCE [GENOMIC DNA] OF 1-267</scope>
    <source>
        <strain>Isolate MVZ 173057</strain>
        <tissue>Liver</tissue>
    </source>
</reference>
<reference key="3">
    <citation type="journal article" date="1991" name="Mol. Biol. Evol.">
        <title>Variation in mitochondrial cytochrome b sequence in natural populations of South American akodontine rodents (Muridae: Sigmodontinae).</title>
        <authorList>
            <person name="Smith M.F."/>
            <person name="Patton J.L."/>
        </authorList>
    </citation>
    <scope>NUCLEOTIDE SEQUENCE [GENOMIC DNA] OF 1-133</scope>
    <source>
        <strain>Isolate MVZ 173057</strain>
        <strain>Isolate MVZ 173058</strain>
        <tissue>Liver</tissue>
    </source>
</reference>
<feature type="chain" id="PRO_0000060552" description="Cytochrome b">
    <location>
        <begin position="1"/>
        <end position="379"/>
    </location>
</feature>
<feature type="transmembrane region" description="Helical" evidence="2">
    <location>
        <begin position="33"/>
        <end position="53"/>
    </location>
</feature>
<feature type="transmembrane region" description="Helical" evidence="2">
    <location>
        <begin position="77"/>
        <end position="98"/>
    </location>
</feature>
<feature type="transmembrane region" description="Helical" evidence="2">
    <location>
        <begin position="113"/>
        <end position="133"/>
    </location>
</feature>
<feature type="transmembrane region" description="Helical" evidence="2">
    <location>
        <begin position="178"/>
        <end position="198"/>
    </location>
</feature>
<feature type="transmembrane region" description="Helical" evidence="2">
    <location>
        <begin position="226"/>
        <end position="246"/>
    </location>
</feature>
<feature type="transmembrane region" description="Helical" evidence="2">
    <location>
        <begin position="288"/>
        <end position="308"/>
    </location>
</feature>
<feature type="transmembrane region" description="Helical" evidence="2">
    <location>
        <begin position="320"/>
        <end position="340"/>
    </location>
</feature>
<feature type="transmembrane region" description="Helical" evidence="2">
    <location>
        <begin position="347"/>
        <end position="367"/>
    </location>
</feature>
<feature type="binding site" description="axial binding residue" evidence="2">
    <location>
        <position position="83"/>
    </location>
    <ligand>
        <name>heme b</name>
        <dbReference type="ChEBI" id="CHEBI:60344"/>
        <label>b562</label>
    </ligand>
    <ligandPart>
        <name>Fe</name>
        <dbReference type="ChEBI" id="CHEBI:18248"/>
    </ligandPart>
</feature>
<feature type="binding site" description="axial binding residue" evidence="2">
    <location>
        <position position="97"/>
    </location>
    <ligand>
        <name>heme b</name>
        <dbReference type="ChEBI" id="CHEBI:60344"/>
        <label>b566</label>
    </ligand>
    <ligandPart>
        <name>Fe</name>
        <dbReference type="ChEBI" id="CHEBI:18248"/>
    </ligandPart>
</feature>
<feature type="binding site" description="axial binding residue" evidence="2">
    <location>
        <position position="182"/>
    </location>
    <ligand>
        <name>heme b</name>
        <dbReference type="ChEBI" id="CHEBI:60344"/>
        <label>b562</label>
    </ligand>
    <ligandPart>
        <name>Fe</name>
        <dbReference type="ChEBI" id="CHEBI:18248"/>
    </ligandPart>
</feature>
<feature type="binding site" description="axial binding residue" evidence="2">
    <location>
        <position position="196"/>
    </location>
    <ligand>
        <name>heme b</name>
        <dbReference type="ChEBI" id="CHEBI:60344"/>
        <label>b566</label>
    </ligand>
    <ligandPart>
        <name>Fe</name>
        <dbReference type="ChEBI" id="CHEBI:18248"/>
    </ligandPart>
</feature>
<feature type="binding site" evidence="2">
    <location>
        <position position="201"/>
    </location>
    <ligand>
        <name>a ubiquinone</name>
        <dbReference type="ChEBI" id="CHEBI:16389"/>
    </ligand>
</feature>
<sequence length="379" mass="42589">MKILRKNHPLLKIINHSFIDLPTPSNISSWWNFGSLLGVCLMIQILTGLFLAMHYTSDTTTAFSSVAHICRDVNYGWLIRYLHANGASMFFICLFIHVGRGIYYGSYVLSETWNIGIILFLTTMATAFVGYVLPWGQMSFWGATVITNLLSAIPYIGNTLVEWIWGGFSVDKATLTRFFAFHFILPFIITAFALVHLLFLHETGSNNPSGLNSDSDKIPFHPYYTIKDLLGIFLLLLALMILALFFPDVLGDPDNFTPANPLNTPAHIKPEWYFLFAYAILRSIPNKLGGVLALILSILILAAFPLLNTSKQHGLIFRPVTQAIYWTFIANLLVLTWIGGQPVEYPFTTIGQXASITYFTIIIILMPVSNIIENNIIKL</sequence>
<geneLocation type="mitochondrion"/>
<gene>
    <name type="primary">MT-CYB</name>
    <name type="synonym">COB</name>
    <name type="synonym">CYTB</name>
    <name type="synonym">MTCYB</name>
</gene>
<protein>
    <recommendedName>
        <fullName>Cytochrome b</fullName>
    </recommendedName>
    <alternativeName>
        <fullName>Complex III subunit 3</fullName>
    </alternativeName>
    <alternativeName>
        <fullName>Complex III subunit III</fullName>
    </alternativeName>
    <alternativeName>
        <fullName>Cytochrome b-c1 complex subunit 3</fullName>
    </alternativeName>
    <alternativeName>
        <fullName>Ubiquinol-cytochrome-c reductase complex cytochrome b subunit</fullName>
    </alternativeName>
</protein>
<dbReference type="EMBL" id="M35699">
    <property type="protein sequence ID" value="AAA16985.2"/>
    <property type="molecule type" value="Genomic_DNA"/>
</dbReference>
<dbReference type="PIR" id="F23725">
    <property type="entry name" value="F23725"/>
</dbReference>
<dbReference type="GO" id="GO:0005743">
    <property type="term" value="C:mitochondrial inner membrane"/>
    <property type="evidence" value="ECO:0007669"/>
    <property type="project" value="UniProtKB-SubCell"/>
</dbReference>
<dbReference type="GO" id="GO:0045275">
    <property type="term" value="C:respiratory chain complex III"/>
    <property type="evidence" value="ECO:0007669"/>
    <property type="project" value="InterPro"/>
</dbReference>
<dbReference type="GO" id="GO:0046872">
    <property type="term" value="F:metal ion binding"/>
    <property type="evidence" value="ECO:0007669"/>
    <property type="project" value="UniProtKB-KW"/>
</dbReference>
<dbReference type="GO" id="GO:0008121">
    <property type="term" value="F:ubiquinol-cytochrome-c reductase activity"/>
    <property type="evidence" value="ECO:0007669"/>
    <property type="project" value="InterPro"/>
</dbReference>
<dbReference type="GO" id="GO:0006122">
    <property type="term" value="P:mitochondrial electron transport, ubiquinol to cytochrome c"/>
    <property type="evidence" value="ECO:0007669"/>
    <property type="project" value="TreeGrafter"/>
</dbReference>
<dbReference type="CDD" id="cd00290">
    <property type="entry name" value="cytochrome_b_C"/>
    <property type="match status" value="1"/>
</dbReference>
<dbReference type="CDD" id="cd00284">
    <property type="entry name" value="Cytochrome_b_N"/>
    <property type="match status" value="1"/>
</dbReference>
<dbReference type="FunFam" id="1.20.810.10:FF:000002">
    <property type="entry name" value="Cytochrome b"/>
    <property type="match status" value="1"/>
</dbReference>
<dbReference type="Gene3D" id="1.20.810.10">
    <property type="entry name" value="Cytochrome Bc1 Complex, Chain C"/>
    <property type="match status" value="1"/>
</dbReference>
<dbReference type="InterPro" id="IPR005798">
    <property type="entry name" value="Cyt_b/b6_C"/>
</dbReference>
<dbReference type="InterPro" id="IPR036150">
    <property type="entry name" value="Cyt_b/b6_C_sf"/>
</dbReference>
<dbReference type="InterPro" id="IPR005797">
    <property type="entry name" value="Cyt_b/b6_N"/>
</dbReference>
<dbReference type="InterPro" id="IPR027387">
    <property type="entry name" value="Cytb/b6-like_sf"/>
</dbReference>
<dbReference type="InterPro" id="IPR030689">
    <property type="entry name" value="Cytochrome_b"/>
</dbReference>
<dbReference type="InterPro" id="IPR048260">
    <property type="entry name" value="Cytochrome_b_C_euk/bac"/>
</dbReference>
<dbReference type="InterPro" id="IPR048259">
    <property type="entry name" value="Cytochrome_b_N_euk/bac"/>
</dbReference>
<dbReference type="InterPro" id="IPR016174">
    <property type="entry name" value="Di-haem_cyt_TM"/>
</dbReference>
<dbReference type="PANTHER" id="PTHR19271">
    <property type="entry name" value="CYTOCHROME B"/>
    <property type="match status" value="1"/>
</dbReference>
<dbReference type="PANTHER" id="PTHR19271:SF16">
    <property type="entry name" value="CYTOCHROME B"/>
    <property type="match status" value="1"/>
</dbReference>
<dbReference type="Pfam" id="PF00032">
    <property type="entry name" value="Cytochrom_B_C"/>
    <property type="match status" value="1"/>
</dbReference>
<dbReference type="Pfam" id="PF00033">
    <property type="entry name" value="Cytochrome_B"/>
    <property type="match status" value="1"/>
</dbReference>
<dbReference type="PIRSF" id="PIRSF038885">
    <property type="entry name" value="COB"/>
    <property type="match status" value="1"/>
</dbReference>
<dbReference type="SUPFAM" id="SSF81648">
    <property type="entry name" value="a domain/subunit of cytochrome bc1 complex (Ubiquinol-cytochrome c reductase)"/>
    <property type="match status" value="1"/>
</dbReference>
<dbReference type="SUPFAM" id="SSF81342">
    <property type="entry name" value="Transmembrane di-heme cytochromes"/>
    <property type="match status" value="1"/>
</dbReference>
<dbReference type="PROSITE" id="PS51003">
    <property type="entry name" value="CYTB_CTER"/>
    <property type="match status" value="1"/>
</dbReference>
<dbReference type="PROSITE" id="PS51002">
    <property type="entry name" value="CYTB_NTER"/>
    <property type="match status" value="1"/>
</dbReference>
<organism>
    <name type="scientific">Akodon orophilus</name>
    <name type="common">El Dorado grass mouse</name>
    <dbReference type="NCBI Taxonomy" id="29099"/>
    <lineage>
        <taxon>Eukaryota</taxon>
        <taxon>Metazoa</taxon>
        <taxon>Chordata</taxon>
        <taxon>Craniata</taxon>
        <taxon>Vertebrata</taxon>
        <taxon>Euteleostomi</taxon>
        <taxon>Mammalia</taxon>
        <taxon>Eutheria</taxon>
        <taxon>Euarchontoglires</taxon>
        <taxon>Glires</taxon>
        <taxon>Rodentia</taxon>
        <taxon>Myomorpha</taxon>
        <taxon>Muroidea</taxon>
        <taxon>Cricetidae</taxon>
        <taxon>Sigmodontinae</taxon>
        <taxon>Akodon</taxon>
    </lineage>
</organism>
<accession>P21718</accession>
<name>CYB_AKOOR</name>
<keyword id="KW-0249">Electron transport</keyword>
<keyword id="KW-0349">Heme</keyword>
<keyword id="KW-0408">Iron</keyword>
<keyword id="KW-0472">Membrane</keyword>
<keyword id="KW-0479">Metal-binding</keyword>
<keyword id="KW-0496">Mitochondrion</keyword>
<keyword id="KW-0999">Mitochondrion inner membrane</keyword>
<keyword id="KW-0679">Respiratory chain</keyword>
<keyword id="KW-0812">Transmembrane</keyword>
<keyword id="KW-1133">Transmembrane helix</keyword>
<keyword id="KW-0813">Transport</keyword>
<keyword id="KW-0830">Ubiquinone</keyword>
<evidence type="ECO:0000250" key="1"/>
<evidence type="ECO:0000250" key="2">
    <source>
        <dbReference type="UniProtKB" id="P00157"/>
    </source>
</evidence>
<evidence type="ECO:0000255" key="3">
    <source>
        <dbReference type="PROSITE-ProRule" id="PRU00967"/>
    </source>
</evidence>
<evidence type="ECO:0000255" key="4">
    <source>
        <dbReference type="PROSITE-ProRule" id="PRU00968"/>
    </source>
</evidence>